<gene>
    <name type="primary">aad-a</name>
</gene>
<proteinExistence type="evidence at protein level"/>
<accession>Q91642</accession>
<accession>Q5PQ56</accession>
<organism>
    <name type="scientific">Xenopus laevis</name>
    <name type="common">African clawed frog</name>
    <dbReference type="NCBI Taxonomy" id="8355"/>
    <lineage>
        <taxon>Eukaryota</taxon>
        <taxon>Metazoa</taxon>
        <taxon>Chordata</taxon>
        <taxon>Craniata</taxon>
        <taxon>Vertebrata</taxon>
        <taxon>Euteleostomi</taxon>
        <taxon>Amphibia</taxon>
        <taxon>Batrachia</taxon>
        <taxon>Anura</taxon>
        <taxon>Pipoidea</taxon>
        <taxon>Pipidae</taxon>
        <taxon>Xenopodinae</taxon>
        <taxon>Xenopus</taxon>
        <taxon>Xenopus</taxon>
    </lineage>
</organism>
<sequence>MMTMRRHLLLVSNSTLHGGGYLEHCQEHILKFLGAQVKRVLFIPYALHDRDAYAKTARQKFEALGYGLDSVHESPDPVDAVKKAEAIFIGGGNTFRLLKALYDNDLIAAIRKRVLEDGVPYIGSSAGTNVATISINTTNDMPIVYPPSLKALELVPFNINPHYLDPDGNSKHMGETREQRITQYHEEHDTPPVLGLREGCFLLVEGDKATLLGITRARLFLRGKNPTEHEPGHDFSFLLGHS</sequence>
<protein>
    <recommendedName>
        <fullName>Alpha-aspartyl dipeptidase</fullName>
        <ecNumber>3.4.13.21</ecNumber>
    </recommendedName>
    <alternativeName>
        <fullName>Asp-specific dipeptidase</fullName>
    </alternativeName>
    <alternativeName>
        <fullName>Dipeptidase E</fullName>
    </alternativeName>
</protein>
<feature type="chain" id="PRO_0000209966" description="Alpha-aspartyl dipeptidase">
    <location>
        <begin position="1"/>
        <end position="242"/>
    </location>
</feature>
<feature type="active site" description="Charge relay system" evidence="1">
    <location>
        <position position="125"/>
    </location>
</feature>
<feature type="active site" description="Charge relay system" evidence="1">
    <location>
        <position position="140"/>
    </location>
</feature>
<feature type="active site" description="Charge relay system" evidence="1">
    <location>
        <position position="162"/>
    </location>
</feature>
<feature type="turn" evidence="3">
    <location>
        <begin position="3"/>
        <end position="5"/>
    </location>
</feature>
<feature type="strand" evidence="3">
    <location>
        <begin position="7"/>
        <end position="12"/>
    </location>
</feature>
<feature type="helix" evidence="3">
    <location>
        <begin position="23"/>
        <end position="25"/>
    </location>
</feature>
<feature type="helix" evidence="3">
    <location>
        <begin position="26"/>
        <end position="33"/>
    </location>
</feature>
<feature type="turn" evidence="3">
    <location>
        <begin position="34"/>
        <end position="36"/>
    </location>
</feature>
<feature type="strand" evidence="3">
    <location>
        <begin position="39"/>
        <end position="43"/>
    </location>
</feature>
<feature type="helix" evidence="3">
    <location>
        <begin position="50"/>
        <end position="63"/>
    </location>
</feature>
<feature type="strand" evidence="3">
    <location>
        <begin position="67"/>
        <end position="70"/>
    </location>
</feature>
<feature type="helix" evidence="3">
    <location>
        <begin position="71"/>
        <end position="73"/>
    </location>
</feature>
<feature type="helix" evidence="3">
    <location>
        <begin position="77"/>
        <end position="83"/>
    </location>
</feature>
<feature type="strand" evidence="3">
    <location>
        <begin position="87"/>
        <end position="89"/>
    </location>
</feature>
<feature type="helix" evidence="3">
    <location>
        <begin position="94"/>
        <end position="103"/>
    </location>
</feature>
<feature type="helix" evidence="3">
    <location>
        <begin position="106"/>
        <end position="115"/>
    </location>
</feature>
<feature type="strand" evidence="3">
    <location>
        <begin position="121"/>
        <end position="124"/>
    </location>
</feature>
<feature type="helix" evidence="3">
    <location>
        <begin position="126"/>
        <end position="129"/>
    </location>
</feature>
<feature type="strand" evidence="3">
    <location>
        <begin position="132"/>
        <end position="135"/>
    </location>
</feature>
<feature type="strand" evidence="3">
    <location>
        <begin position="154"/>
        <end position="161"/>
    </location>
</feature>
<feature type="helix" evidence="3">
    <location>
        <begin position="177"/>
        <end position="186"/>
    </location>
</feature>
<feature type="strand" evidence="3">
    <location>
        <begin position="193"/>
        <end position="196"/>
    </location>
</feature>
<feature type="strand" evidence="3">
    <location>
        <begin position="200"/>
        <end position="205"/>
    </location>
</feature>
<feature type="strand" evidence="3">
    <location>
        <begin position="208"/>
        <end position="215"/>
    </location>
</feature>
<feature type="strand" evidence="3">
    <location>
        <begin position="217"/>
        <end position="220"/>
    </location>
</feature>
<feature type="strand" evidence="3">
    <location>
        <begin position="227"/>
        <end position="229"/>
    </location>
</feature>
<feature type="helix" evidence="3">
    <location>
        <begin position="236"/>
        <end position="238"/>
    </location>
</feature>
<dbReference type="EC" id="3.4.13.21"/>
<dbReference type="EMBL" id="U37377">
    <property type="protein sequence ID" value="AAC59869.1"/>
    <property type="molecule type" value="mRNA"/>
</dbReference>
<dbReference type="EMBL" id="BC087353">
    <property type="protein sequence ID" value="AAH87353.1"/>
    <property type="molecule type" value="mRNA"/>
</dbReference>
<dbReference type="RefSeq" id="NP_001079269.1">
    <property type="nucleotide sequence ID" value="NM_001085800.1"/>
</dbReference>
<dbReference type="PDB" id="7C9B">
    <property type="method" value="X-ray"/>
    <property type="resolution" value="1.40 A"/>
    <property type="chains" value="A=1-242"/>
</dbReference>
<dbReference type="PDB" id="7FFP">
    <property type="method" value="X-ray"/>
    <property type="resolution" value="1.80 A"/>
    <property type="chains" value="A=1-242"/>
</dbReference>
<dbReference type="PDBsum" id="7C9B"/>
<dbReference type="PDBsum" id="7FFP"/>
<dbReference type="SMR" id="Q91642"/>
<dbReference type="MEROPS" id="S51.002"/>
<dbReference type="DNASU" id="378550"/>
<dbReference type="GeneID" id="378550"/>
<dbReference type="KEGG" id="xla:378550"/>
<dbReference type="AGR" id="Xenbase:XB-GENE-480548"/>
<dbReference type="CTD" id="378550"/>
<dbReference type="Xenbase" id="XB-GENE-480548">
    <property type="gene designation" value="dpepe.L"/>
</dbReference>
<dbReference type="OMA" id="PWGYAVE"/>
<dbReference type="OrthoDB" id="10052168at2759"/>
<dbReference type="Proteomes" id="UP000186698">
    <property type="component" value="Chromosome 9_10L"/>
</dbReference>
<dbReference type="Bgee" id="378550">
    <property type="expression patterns" value="Expressed in intestine and 20 other cell types or tissues"/>
</dbReference>
<dbReference type="GO" id="GO:0005737">
    <property type="term" value="C:cytoplasm"/>
    <property type="evidence" value="ECO:0007669"/>
    <property type="project" value="UniProtKB-SubCell"/>
</dbReference>
<dbReference type="GO" id="GO:0016805">
    <property type="term" value="F:dipeptidase activity"/>
    <property type="evidence" value="ECO:0007669"/>
    <property type="project" value="UniProtKB-KW"/>
</dbReference>
<dbReference type="GO" id="GO:0008236">
    <property type="term" value="F:serine-type peptidase activity"/>
    <property type="evidence" value="ECO:0007669"/>
    <property type="project" value="UniProtKB-KW"/>
</dbReference>
<dbReference type="GO" id="GO:0006508">
    <property type="term" value="P:proteolysis"/>
    <property type="evidence" value="ECO:0007669"/>
    <property type="project" value="UniProtKB-KW"/>
</dbReference>
<dbReference type="CDD" id="cd03146">
    <property type="entry name" value="GAT1_Peptidase_E"/>
    <property type="match status" value="1"/>
</dbReference>
<dbReference type="FunFam" id="3.40.50.880:FF:000007">
    <property type="entry name" value="Peptidase E"/>
    <property type="match status" value="1"/>
</dbReference>
<dbReference type="Gene3D" id="3.40.50.880">
    <property type="match status" value="1"/>
</dbReference>
<dbReference type="InterPro" id="IPR029062">
    <property type="entry name" value="Class_I_gatase-like"/>
</dbReference>
<dbReference type="InterPro" id="IPR005320">
    <property type="entry name" value="Peptidase_S51"/>
</dbReference>
<dbReference type="NCBIfam" id="NF003642">
    <property type="entry name" value="PRK05282.1"/>
    <property type="match status" value="1"/>
</dbReference>
<dbReference type="PANTHER" id="PTHR20842:SF0">
    <property type="entry name" value="ALPHA-ASPARTYL DIPEPTIDASE"/>
    <property type="match status" value="1"/>
</dbReference>
<dbReference type="PANTHER" id="PTHR20842">
    <property type="entry name" value="PROTEASE S51 ALPHA-ASPARTYL DIPEPTIDASE"/>
    <property type="match status" value="1"/>
</dbReference>
<dbReference type="Pfam" id="PF03575">
    <property type="entry name" value="Peptidase_S51"/>
    <property type="match status" value="1"/>
</dbReference>
<dbReference type="SUPFAM" id="SSF52317">
    <property type="entry name" value="Class I glutamine amidotransferase-like"/>
    <property type="match status" value="1"/>
</dbReference>
<keyword id="KW-0002">3D-structure</keyword>
<keyword id="KW-0963">Cytoplasm</keyword>
<keyword id="KW-0224">Dipeptidase</keyword>
<keyword id="KW-0378">Hydrolase</keyword>
<keyword id="KW-0645">Protease</keyword>
<keyword id="KW-1185">Reference proteome</keyword>
<keyword id="KW-0720">Serine protease</keyword>
<name>PEPE_XENLA</name>
<evidence type="ECO:0000250" key="1"/>
<evidence type="ECO:0000305" key="2"/>
<evidence type="ECO:0007829" key="3">
    <source>
        <dbReference type="PDB" id="7C9B"/>
    </source>
</evidence>
<comment type="function">
    <text>Hydrolyzes dipeptides containing N-terminal aspartate residues.</text>
</comment>
<comment type="catalytic activity">
    <reaction>
        <text>Dipeptidase E catalyzes the hydrolysis of dipeptides Asp-|-Xaa. It does not act on peptides with N-terminal Glu, Asn or Gln, nor does it cleave isoaspartyl peptides.</text>
        <dbReference type="EC" id="3.4.13.21"/>
    </reaction>
</comment>
<comment type="subcellular location">
    <subcellularLocation>
        <location evidence="1">Cytoplasm</location>
    </subcellularLocation>
</comment>
<comment type="similarity">
    <text evidence="2">Belongs to the peptidase S51 family.</text>
</comment>
<reference key="1">
    <citation type="journal article" date="1996" name="Proc. Natl. Acad. Sci. U.S.A.">
        <title>The thyroid hormone-induced tail resorption program during Xenopus laevis metamorphosis.</title>
        <authorList>
            <person name="Brown D.D."/>
            <person name="Wang Z."/>
            <person name="Furlow J.D."/>
            <person name="Kanamori A."/>
            <person name="Schwartzman R.A."/>
            <person name="Remo B.F."/>
            <person name="Pinder A."/>
        </authorList>
    </citation>
    <scope>NUCLEOTIDE SEQUENCE [MRNA]</scope>
</reference>
<reference key="2">
    <citation type="submission" date="2004-12" db="EMBL/GenBank/DDBJ databases">
        <authorList>
            <consortium name="NIH - Xenopus Gene Collection (XGC) project"/>
        </authorList>
    </citation>
    <scope>NUCLEOTIDE SEQUENCE [LARGE SCALE MRNA]</scope>
    <source>
        <tissue>Testis</tissue>
    </source>
</reference>
<reference key="3">
    <citation type="journal article" date="2000" name="J. Bacteriol.">
        <title>Peptidase E, a peptidase specific for N-terminal aspartic dipeptides, is a serine hydrolase.</title>
        <authorList>
            <person name="Lassy R.A."/>
            <person name="Miller C.G."/>
        </authorList>
    </citation>
    <scope>CHARACTERIZATION</scope>
</reference>